<organism>
    <name type="scientific">Doryteuthis pealeii</name>
    <name type="common">Longfin inshore squid</name>
    <name type="synonym">Loligo pealeii</name>
    <dbReference type="NCBI Taxonomy" id="1051067"/>
    <lineage>
        <taxon>Eukaryota</taxon>
        <taxon>Metazoa</taxon>
        <taxon>Spiralia</taxon>
        <taxon>Lophotrochozoa</taxon>
        <taxon>Mollusca</taxon>
        <taxon>Cephalopoda</taxon>
        <taxon>Coleoidea</taxon>
        <taxon>Decapodiformes</taxon>
        <taxon>Myopsida</taxon>
        <taxon>Loliginidae</taxon>
        <taxon>Doryteuthis</taxon>
    </lineage>
</organism>
<reference key="1">
    <citation type="journal article" date="1993" name="DNA Cell Biol.">
        <title>Kinesin light chains: identification and characterization of a family of proteins from the optic lobe of the squid Loligo pealii.</title>
        <authorList>
            <person name="Beushausen S."/>
            <person name="Kladakis A."/>
            <person name="Jaffe H."/>
        </authorList>
    </citation>
    <scope>NUCLEOTIDE SEQUENCE [MRNA] (ISOFORMS 1; 2; 3 AND 4)</scope>
    <source>
        <tissue>Optic lobe</tissue>
    </source>
</reference>
<proteinExistence type="evidence at transcript level"/>
<sequence length="571" mass="64452">MEVTQTVKSYRIKKIEEIGKMTALSQEEIISNTKTVIQGLDTLKNEHNQILNSLLTSMKTIRKENGDTNLVEEKANILKKSVDSIELGLGEAQVMMALANHLQHTEAEKQKLRAQVRRLCQENAWLRDELANTQQKLQMSEQKVATIEEEKKHLEFMNEMKKYDTNEAQVNEEKESEQSSLDLGFPDDDDDGGQPEVLSPTQPSAMAQAASGGCEIPARLRTLHNLVIQYASQGRYEVAVPLCKQALEDLEKTSGHDHPDVATMLNILALVYRDQGKYKEAANLLNDALGIREKTLGPDHPAVAATLNNLAVLYGKRGKYKDAEPLCKRALVIREKVLGKDHPDVAKQLNNLALLCQNQGKYEEVERYYQRALEIYQKELGPDDPNVAKTKNNLASAYLKQGKYKQAEILYKEVLTRAHEKEFGKVDDDNKPIWMQAEEREENKAKYKDGAPQPDYGSWLKAVKVDSPTVTTTLKNLGALYRRQGKYEAAETLEECALRSRKSALEVVRQTKISDVLGSDFSKGQSPKDRKRSNSRDRNRRDSMDSVSYEKSGDGDEHEKSKLHVGTSHKQ</sequence>
<accession>P46825</accession>
<keyword id="KW-0025">Alternative splicing</keyword>
<keyword id="KW-0175">Coiled coil</keyword>
<keyword id="KW-0963">Cytoplasm</keyword>
<keyword id="KW-0206">Cytoskeleton</keyword>
<keyword id="KW-0493">Microtubule</keyword>
<keyword id="KW-0505">Motor protein</keyword>
<keyword id="KW-0677">Repeat</keyword>
<keyword id="KW-0802">TPR repeat</keyword>
<dbReference type="EMBL" id="L24440">
    <property type="protein sequence ID" value="AAA16578.1"/>
    <property type="molecule type" value="mRNA"/>
</dbReference>
<dbReference type="EMBL" id="L24441">
    <property type="protein sequence ID" value="AAA16580.1"/>
    <property type="molecule type" value="mRNA"/>
</dbReference>
<dbReference type="EMBL" id="L24439">
    <property type="protein sequence ID" value="AAA16577.1"/>
    <property type="molecule type" value="mRNA"/>
</dbReference>
<dbReference type="SMR" id="P46825"/>
<dbReference type="GO" id="GO:0005737">
    <property type="term" value="C:cytoplasm"/>
    <property type="evidence" value="ECO:0007669"/>
    <property type="project" value="UniProtKB-KW"/>
</dbReference>
<dbReference type="GO" id="GO:0005871">
    <property type="term" value="C:kinesin complex"/>
    <property type="evidence" value="ECO:0007669"/>
    <property type="project" value="InterPro"/>
</dbReference>
<dbReference type="GO" id="GO:0005874">
    <property type="term" value="C:microtubule"/>
    <property type="evidence" value="ECO:0007669"/>
    <property type="project" value="UniProtKB-KW"/>
</dbReference>
<dbReference type="GO" id="GO:0019894">
    <property type="term" value="F:kinesin binding"/>
    <property type="evidence" value="ECO:0007669"/>
    <property type="project" value="TreeGrafter"/>
</dbReference>
<dbReference type="GO" id="GO:0007018">
    <property type="term" value="P:microtubule-based movement"/>
    <property type="evidence" value="ECO:0007669"/>
    <property type="project" value="TreeGrafter"/>
</dbReference>
<dbReference type="FunFam" id="1.25.40.10:FF:000003">
    <property type="entry name" value="kinesin light chain isoform X1"/>
    <property type="match status" value="1"/>
</dbReference>
<dbReference type="Gene3D" id="1.25.40.10">
    <property type="entry name" value="Tetratricopeptide repeat domain"/>
    <property type="match status" value="1"/>
</dbReference>
<dbReference type="InterPro" id="IPR002151">
    <property type="entry name" value="Kinesin_light"/>
</dbReference>
<dbReference type="InterPro" id="IPR015792">
    <property type="entry name" value="Kinesin_light_repeat"/>
</dbReference>
<dbReference type="InterPro" id="IPR011990">
    <property type="entry name" value="TPR-like_helical_dom_sf"/>
</dbReference>
<dbReference type="InterPro" id="IPR019734">
    <property type="entry name" value="TPR_rpt"/>
</dbReference>
<dbReference type="PANTHER" id="PTHR45783">
    <property type="entry name" value="KINESIN LIGHT CHAIN"/>
    <property type="match status" value="1"/>
</dbReference>
<dbReference type="PANTHER" id="PTHR45783:SF3">
    <property type="entry name" value="KINESIN LIGHT CHAIN"/>
    <property type="match status" value="1"/>
</dbReference>
<dbReference type="Pfam" id="PF13374">
    <property type="entry name" value="TPR_10"/>
    <property type="match status" value="2"/>
</dbReference>
<dbReference type="Pfam" id="PF13424">
    <property type="entry name" value="TPR_12"/>
    <property type="match status" value="2"/>
</dbReference>
<dbReference type="PRINTS" id="PR00381">
    <property type="entry name" value="KINESINLIGHT"/>
</dbReference>
<dbReference type="SMART" id="SM00028">
    <property type="entry name" value="TPR"/>
    <property type="match status" value="5"/>
</dbReference>
<dbReference type="SUPFAM" id="SSF48452">
    <property type="entry name" value="TPR-like"/>
    <property type="match status" value="2"/>
</dbReference>
<dbReference type="PROSITE" id="PS01160">
    <property type="entry name" value="KINESIN_LIGHT"/>
    <property type="match status" value="4"/>
</dbReference>
<dbReference type="PROSITE" id="PS50005">
    <property type="entry name" value="TPR"/>
    <property type="match status" value="6"/>
</dbReference>
<dbReference type="PROSITE" id="PS50293">
    <property type="entry name" value="TPR_REGION"/>
    <property type="match status" value="2"/>
</dbReference>
<evidence type="ECO:0000256" key="1">
    <source>
        <dbReference type="SAM" id="MobiDB-lite"/>
    </source>
</evidence>
<evidence type="ECO:0000303" key="2">
    <source>
    </source>
</evidence>
<evidence type="ECO:0000305" key="3"/>
<comment type="function">
    <text>Kinesin is a microtubule-associated force-producing protein that may play a role in organelle transport. The light chain may function in coupling of cargo to the heavy chain or in the modulation of its ATPase activity.</text>
</comment>
<comment type="subunit">
    <text>Oligomeric complex composed of two heavy chains and two light chains.</text>
</comment>
<comment type="subcellular location">
    <subcellularLocation>
        <location evidence="3">Cytoplasm</location>
        <location evidence="3">Cytoskeleton</location>
    </subcellularLocation>
</comment>
<comment type="alternative products">
    <event type="alternative splicing"/>
    <isoform>
        <id>P46825-1</id>
        <name>1</name>
        <name>F</name>
        <name>38.2</name>
        <sequence type="displayed"/>
    </isoform>
    <isoform>
        <id>P46825-2</id>
        <name>2</name>
        <name>35.2</name>
        <sequence type="described" ref="VSP_002873 VSP_002874 VSP_002875"/>
    </isoform>
    <isoform>
        <id>P46825-3</id>
        <name>3</name>
        <name>36.2</name>
        <sequence type="described" ref="VSP_002874"/>
    </isoform>
    <isoform>
        <id>P46825-4</id>
        <name>4</name>
        <name>37.3</name>
        <sequence type="described" ref="VSP_002874 VSP_002876"/>
    </isoform>
    <text>Additional isoforms seem to exist.</text>
</comment>
<comment type="domain">
    <text>The light chain is composed of three structural domains: a large globular N-terminal domain which may be involved in binding to kinesin heavy chains, a central alpha-helical coiled-coil domain that mediates the light chain dimerization; and a small globular C-terminal which may play a role in regulating mechanochemical activity or attachment of kinesin to membrane-bound organelles.</text>
</comment>
<comment type="similarity">
    <text evidence="3">Belongs to the kinesin light chain family.</text>
</comment>
<feature type="chain" id="PRO_0000215099" description="Kinesin light chain">
    <location>
        <begin position="1"/>
        <end position="571"/>
    </location>
</feature>
<feature type="repeat" description="TPR 1">
    <location>
        <begin position="220"/>
        <end position="253"/>
    </location>
</feature>
<feature type="repeat" description="TPR 2">
    <location>
        <begin position="262"/>
        <end position="295"/>
    </location>
</feature>
<feature type="repeat" description="TPR 3">
    <location>
        <begin position="304"/>
        <end position="337"/>
    </location>
</feature>
<feature type="repeat" description="TPR 4">
    <location>
        <begin position="346"/>
        <end position="379"/>
    </location>
</feature>
<feature type="repeat" description="TPR 5">
    <location>
        <begin position="388"/>
        <end position="421"/>
    </location>
</feature>
<feature type="repeat" description="TPR 6">
    <location>
        <begin position="471"/>
        <end position="504"/>
    </location>
</feature>
<feature type="region of interest" description="Disordered" evidence="1">
    <location>
        <begin position="167"/>
        <end position="210"/>
    </location>
</feature>
<feature type="region of interest" description="Disordered" evidence="1">
    <location>
        <begin position="518"/>
        <end position="571"/>
    </location>
</feature>
<feature type="coiled-coil region">
    <location>
        <begin position="54"/>
        <end position="160"/>
    </location>
</feature>
<feature type="compositionally biased region" description="Basic and acidic residues" evidence="1">
    <location>
        <begin position="167"/>
        <end position="177"/>
    </location>
</feature>
<feature type="compositionally biased region" description="Basic and acidic residues" evidence="1">
    <location>
        <begin position="526"/>
        <end position="544"/>
    </location>
</feature>
<feature type="compositionally biased region" description="Basic and acidic residues" evidence="1">
    <location>
        <begin position="551"/>
        <end position="562"/>
    </location>
</feature>
<feature type="splice variant" id="VSP_002873" description="In isoform 2." evidence="2">
    <location>
        <begin position="1"/>
        <end position="20"/>
    </location>
</feature>
<feature type="splice variant" id="VSP_002874" description="In isoform 4, isoform 3 and isoform 2." evidence="2">
    <original>D</original>
    <variation>DRMTEHGDNRRGHQ</variation>
    <location>
        <position position="466"/>
    </location>
</feature>
<feature type="splice variant" id="VSP_002875" description="In isoform 2." evidence="2">
    <location>
        <begin position="504"/>
        <end position="557"/>
    </location>
</feature>
<feature type="splice variant" id="VSP_002876" description="In isoform 4." evidence="2">
    <original>HEKSKLHVGTSHKQ</original>
    <variation>NGKLKRSGSFSKLRASIRRSSAKLVQKLKGRGYGDSDNSVSMKRASSMSVLHTSSKDDKLNENRRSIGDLSIRSRSRTASSDQLSSRPF</variation>
    <location>
        <begin position="558"/>
        <end position="571"/>
    </location>
</feature>
<feature type="sequence conflict" description="In Ref. 1; AAA16580." evidence="3" ref="1">
    <original>C</original>
    <variation>Y</variation>
    <location>
        <position position="214"/>
    </location>
</feature>
<feature type="sequence conflict" description="In Ref. 1; AAA16580." evidence="3" ref="1">
    <original>P</original>
    <variation>L</variation>
    <location>
        <position position="259"/>
    </location>
</feature>
<feature type="sequence conflict" description="In Ref. 1; AAA16580." evidence="3" ref="1">
    <original>I</original>
    <variation>T</variation>
    <location>
        <position position="291"/>
    </location>
</feature>
<feature type="sequence conflict" description="In Ref. 1; AAA16580." evidence="3" ref="1">
    <original>L</original>
    <variation>H</variation>
    <location>
        <position position="460"/>
    </location>
</feature>
<protein>
    <recommendedName>
        <fullName>Kinesin light chain</fullName>
        <shortName>KLC</shortName>
    </recommendedName>
</protein>
<name>KLC_DORPE</name>